<organismHost>
    <name type="scientific">Acheta domesticus</name>
    <name type="common">House cricket</name>
    <dbReference type="NCBI Taxonomy" id="6997"/>
</organismHost>
<organismHost>
    <name type="scientific">Chilo suppressalis</name>
    <name type="common">Asiatic rice borer moth</name>
    <dbReference type="NCBI Taxonomy" id="168631"/>
</organismHost>
<organismHost>
    <name type="scientific">Gryllus bimaculatus</name>
    <name type="common">Two-spotted cricket</name>
    <dbReference type="NCBI Taxonomy" id="6999"/>
</organismHost>
<organismHost>
    <name type="scientific">Gryllus campestris</name>
    <dbReference type="NCBI Taxonomy" id="58607"/>
</organismHost>
<organismHost>
    <name type="scientific">Spodoptera frugiperda</name>
    <name type="common">Fall armyworm</name>
    <dbReference type="NCBI Taxonomy" id="7108"/>
</organismHost>
<gene>
    <name type="ORF">IIV6-098R</name>
</gene>
<name>VF098_IIV6</name>
<evidence type="ECO:0000305" key="1"/>
<keyword id="KW-1185">Reference proteome</keyword>
<dbReference type="EMBL" id="AF303741">
    <property type="protein sequence ID" value="AAB94431.1"/>
    <property type="molecule type" value="Genomic_DNA"/>
</dbReference>
<dbReference type="PIR" id="T03057">
    <property type="entry name" value="T03057"/>
</dbReference>
<dbReference type="RefSeq" id="NP_149561.1">
    <property type="nucleotide sequence ID" value="NC_003038.1"/>
</dbReference>
<dbReference type="KEGG" id="vg:1733087"/>
<dbReference type="OrthoDB" id="5282at10239"/>
<dbReference type="Proteomes" id="UP000001359">
    <property type="component" value="Genome"/>
</dbReference>
<dbReference type="Gene3D" id="1.10.510.10">
    <property type="entry name" value="Transferase(Phosphotransferase) domain 1"/>
    <property type="match status" value="1"/>
</dbReference>
<dbReference type="InterPro" id="IPR011009">
    <property type="entry name" value="Kinase-like_dom_sf"/>
</dbReference>
<dbReference type="SUPFAM" id="SSF56112">
    <property type="entry name" value="Protein kinase-like (PK-like)"/>
    <property type="match status" value="1"/>
</dbReference>
<protein>
    <recommendedName>
        <fullName>Uncharacterized protein 098R</fullName>
    </recommendedName>
</protein>
<organism>
    <name type="scientific">Invertebrate iridescent virus 6</name>
    <name type="common">IIV-6</name>
    <name type="synonym">Chilo iridescent virus</name>
    <dbReference type="NCBI Taxonomy" id="176652"/>
    <lineage>
        <taxon>Viruses</taxon>
        <taxon>Varidnaviria</taxon>
        <taxon>Bamfordvirae</taxon>
        <taxon>Nucleocytoviricota</taxon>
        <taxon>Megaviricetes</taxon>
        <taxon>Pimascovirales</taxon>
        <taxon>Iridoviridae</taxon>
        <taxon>Betairidovirinae</taxon>
        <taxon>Iridovirus</taxon>
    </lineage>
</organism>
<accession>O55720</accession>
<feature type="chain" id="PRO_0000377986" description="Uncharacterized protein 098R">
    <location>
        <begin position="1"/>
        <end position="602"/>
    </location>
</feature>
<comment type="similarity">
    <text evidence="1">Belongs to the IIV-6 098R family.</text>
</comment>
<sequence length="602" mass="70270">MSDSDYVDYPSYNILKKIVIKDGLRAFKFFKKIIDNTSQGSVGILKCVVSDESIYVDEECEQISSREFMTINNNQNERYIIYKIGTETPYLCRHEFAVSVSLDKLSPFLPNFMKPYDLIKNVRADPRQKNPFVTLIEEKSGSEKMRLTTKKSKPKTFSDMALFEYINSNMTLAELISINVKGKRQTRVTLNEEIQKIKASDFKIINSLLNQLMIAILIAQKKLSFIHNDLHFDNVLICKCLQRTFMLYVFEYNSICYALLPTYGYYPIIIDYGFSFSEDLIGGPLLTGIHHNNKGYMNHQYDEFTDFKTMLTRLSYSGYQFGLDKKDAFQSLIFDKLISKLPIDKQTGWDETKDISVSKQLVRHIRIFVDDYLKSINRESFFQKYDYEMVDMIGSLIILPLRKKNTENLVETLAIFFKEWLKIEKWIGSSHMKIFVFKNIIDKIRSDVLCSNNTPTSSFSLRENSVSLQETLQNFQKTIYKIMNEVGDNIILTGLNYELFYKSILKLSDCFEGIMYKFNQKCISRKTKEYSKMEMKSSLEMYQLVEPFISNDYQLECGDYFVVCNSINETTSSFVLKDLETVNTVNSMDRADRAEYLFKSMV</sequence>
<proteinExistence type="inferred from homology"/>
<reference key="1">
    <citation type="journal article" date="2001" name="Virology">
        <title>Analysis of the first complete DNA sequence of an invertebrate iridovirus: coding strategy of the genome of Chilo iridescent virus.</title>
        <authorList>
            <person name="Jakob N.J."/>
            <person name="Mueller K."/>
            <person name="Bahr U."/>
            <person name="Darai G."/>
        </authorList>
    </citation>
    <scope>NUCLEOTIDE SEQUENCE [LARGE SCALE GENOMIC DNA]</scope>
</reference>
<reference key="2">
    <citation type="journal article" date="2007" name="Virol. J.">
        <title>Comparative genomic analysis of the family Iridoviridae: re-annotating and defining the core set of iridovirus genes.</title>
        <authorList>
            <person name="Eaton H.E."/>
            <person name="Metcalf J."/>
            <person name="Penny E."/>
            <person name="Tcherepanov V."/>
            <person name="Upton C."/>
            <person name="Brunetti C.R."/>
        </authorList>
    </citation>
    <scope>GENOME REANNOTATION</scope>
</reference>